<comment type="catalytic activity">
    <reaction evidence="1">
        <text>1-(5-phospho-beta-D-ribosyl)-5-[(5-phospho-beta-D-ribosylamino)methylideneamino]imidazole-4-carboxamide = 5-[(5-phospho-1-deoxy-D-ribulos-1-ylimino)methylamino]-1-(5-phospho-beta-D-ribosyl)imidazole-4-carboxamide</text>
        <dbReference type="Rhea" id="RHEA:15469"/>
        <dbReference type="ChEBI" id="CHEBI:58435"/>
        <dbReference type="ChEBI" id="CHEBI:58525"/>
        <dbReference type="EC" id="5.3.1.16"/>
    </reaction>
</comment>
<comment type="pathway">
    <text evidence="1">Amino-acid biosynthesis; L-histidine biosynthesis; L-histidine from 5-phospho-alpha-D-ribose 1-diphosphate: step 4/9.</text>
</comment>
<comment type="subcellular location">
    <subcellularLocation>
        <location evidence="1">Cytoplasm</location>
    </subcellularLocation>
</comment>
<comment type="similarity">
    <text evidence="1">Belongs to the HisA/HisF family.</text>
</comment>
<reference key="1">
    <citation type="journal article" date="2005" name="J. Bacteriol.">
        <title>Whole-genome sequence analysis of Pseudomonas syringae pv. phaseolicola 1448A reveals divergence among pathovars in genes involved in virulence and transposition.</title>
        <authorList>
            <person name="Joardar V."/>
            <person name="Lindeberg M."/>
            <person name="Jackson R.W."/>
            <person name="Selengut J."/>
            <person name="Dodson R."/>
            <person name="Brinkac L.M."/>
            <person name="Daugherty S.C."/>
            <person name="DeBoy R.T."/>
            <person name="Durkin A.S."/>
            <person name="Gwinn Giglio M."/>
            <person name="Madupu R."/>
            <person name="Nelson W.C."/>
            <person name="Rosovitz M.J."/>
            <person name="Sullivan S.A."/>
            <person name="Crabtree J."/>
            <person name="Creasy T."/>
            <person name="Davidsen T.M."/>
            <person name="Haft D.H."/>
            <person name="Zafar N."/>
            <person name="Zhou L."/>
            <person name="Halpin R."/>
            <person name="Holley T."/>
            <person name="Khouri H.M."/>
            <person name="Feldblyum T.V."/>
            <person name="White O."/>
            <person name="Fraser C.M."/>
            <person name="Chatterjee A.K."/>
            <person name="Cartinhour S."/>
            <person name="Schneider D."/>
            <person name="Mansfield J.W."/>
            <person name="Collmer A."/>
            <person name="Buell R."/>
        </authorList>
    </citation>
    <scope>NUCLEOTIDE SEQUENCE [LARGE SCALE GENOMIC DNA]</scope>
    <source>
        <strain>1448A / Race 6</strain>
    </source>
</reference>
<feature type="chain" id="PRO_0000229074" description="1-(5-phosphoribosyl)-5-[(5-phosphoribosylamino)methylideneamino] imidazole-4-carboxamide isomerase">
    <location>
        <begin position="1"/>
        <end position="245"/>
    </location>
</feature>
<feature type="active site" description="Proton acceptor" evidence="1">
    <location>
        <position position="8"/>
    </location>
</feature>
<feature type="active site" description="Proton donor" evidence="1">
    <location>
        <position position="130"/>
    </location>
</feature>
<gene>
    <name evidence="1" type="primary">hisA</name>
    <name type="ordered locus">PSPPH_4923</name>
</gene>
<dbReference type="EC" id="5.3.1.16" evidence="1"/>
<dbReference type="EMBL" id="CP000058">
    <property type="protein sequence ID" value="AAZ34241.1"/>
    <property type="molecule type" value="Genomic_DNA"/>
</dbReference>
<dbReference type="RefSeq" id="WP_002551457.1">
    <property type="nucleotide sequence ID" value="NC_005773.3"/>
</dbReference>
<dbReference type="SMR" id="Q48C80"/>
<dbReference type="GeneID" id="61872459"/>
<dbReference type="KEGG" id="psp:PSPPH_4923"/>
<dbReference type="eggNOG" id="COG0106">
    <property type="taxonomic scope" value="Bacteria"/>
</dbReference>
<dbReference type="HOGENOM" id="CLU_048577_1_1_6"/>
<dbReference type="UniPathway" id="UPA00031">
    <property type="reaction ID" value="UER00009"/>
</dbReference>
<dbReference type="Proteomes" id="UP000000551">
    <property type="component" value="Chromosome"/>
</dbReference>
<dbReference type="GO" id="GO:0005737">
    <property type="term" value="C:cytoplasm"/>
    <property type="evidence" value="ECO:0007669"/>
    <property type="project" value="UniProtKB-SubCell"/>
</dbReference>
<dbReference type="GO" id="GO:0003949">
    <property type="term" value="F:1-(5-phosphoribosyl)-5-[(5-phosphoribosylamino)methylideneamino]imidazole-4-carboxamide isomerase activity"/>
    <property type="evidence" value="ECO:0007669"/>
    <property type="project" value="UniProtKB-UniRule"/>
</dbReference>
<dbReference type="GO" id="GO:0000105">
    <property type="term" value="P:L-histidine biosynthetic process"/>
    <property type="evidence" value="ECO:0007669"/>
    <property type="project" value="UniProtKB-UniRule"/>
</dbReference>
<dbReference type="GO" id="GO:0000162">
    <property type="term" value="P:L-tryptophan biosynthetic process"/>
    <property type="evidence" value="ECO:0007669"/>
    <property type="project" value="TreeGrafter"/>
</dbReference>
<dbReference type="CDD" id="cd04732">
    <property type="entry name" value="HisA"/>
    <property type="match status" value="1"/>
</dbReference>
<dbReference type="FunFam" id="3.20.20.70:FF:000009">
    <property type="entry name" value="1-(5-phosphoribosyl)-5-[(5-phosphoribosylamino)methylideneamino] imidazole-4-carboxamide isomerase"/>
    <property type="match status" value="1"/>
</dbReference>
<dbReference type="Gene3D" id="3.20.20.70">
    <property type="entry name" value="Aldolase class I"/>
    <property type="match status" value="1"/>
</dbReference>
<dbReference type="HAMAP" id="MF_01014">
    <property type="entry name" value="HisA"/>
    <property type="match status" value="1"/>
</dbReference>
<dbReference type="InterPro" id="IPR013785">
    <property type="entry name" value="Aldolase_TIM"/>
</dbReference>
<dbReference type="InterPro" id="IPR006062">
    <property type="entry name" value="His_biosynth"/>
</dbReference>
<dbReference type="InterPro" id="IPR006063">
    <property type="entry name" value="HisA_bact_arch"/>
</dbReference>
<dbReference type="InterPro" id="IPR044524">
    <property type="entry name" value="Isoase_HisA-like"/>
</dbReference>
<dbReference type="InterPro" id="IPR023016">
    <property type="entry name" value="Isoase_HisA-like_bact"/>
</dbReference>
<dbReference type="InterPro" id="IPR011060">
    <property type="entry name" value="RibuloseP-bd_barrel"/>
</dbReference>
<dbReference type="NCBIfam" id="TIGR00007">
    <property type="entry name" value="1-(5-phosphoribosyl)-5-[(5-phosphoribosylamino)methylideneamino]imidazole-4-carboxamide isomerase"/>
    <property type="match status" value="1"/>
</dbReference>
<dbReference type="PANTHER" id="PTHR43090">
    <property type="entry name" value="1-(5-PHOSPHORIBOSYL)-5-[(5-PHOSPHORIBOSYLAMINO)METHYLIDENEAMINO] IMIDAZOLE-4-CARBOXAMIDE ISOMERASE"/>
    <property type="match status" value="1"/>
</dbReference>
<dbReference type="PANTHER" id="PTHR43090:SF2">
    <property type="entry name" value="1-(5-PHOSPHORIBOSYL)-5-[(5-PHOSPHORIBOSYLAMINO)METHYLIDENEAMINO] IMIDAZOLE-4-CARBOXAMIDE ISOMERASE"/>
    <property type="match status" value="1"/>
</dbReference>
<dbReference type="Pfam" id="PF00977">
    <property type="entry name" value="His_biosynth"/>
    <property type="match status" value="1"/>
</dbReference>
<dbReference type="SUPFAM" id="SSF51366">
    <property type="entry name" value="Ribulose-phoshate binding barrel"/>
    <property type="match status" value="1"/>
</dbReference>
<protein>
    <recommendedName>
        <fullName evidence="1">1-(5-phosphoribosyl)-5-[(5-phosphoribosylamino)methylideneamino] imidazole-4-carboxamide isomerase</fullName>
        <ecNumber evidence="1">5.3.1.16</ecNumber>
    </recommendedName>
    <alternativeName>
        <fullName evidence="1">Phosphoribosylformimino-5-aminoimidazole carboxamide ribotide isomerase</fullName>
    </alternativeName>
</protein>
<evidence type="ECO:0000255" key="1">
    <source>
        <dbReference type="HAMAP-Rule" id="MF_01014"/>
    </source>
</evidence>
<accession>Q48C80</accession>
<proteinExistence type="inferred from homology"/>
<sequence length="245" mass="25891">MLIIPAIDLKDGACVRLRQGRMEDSTVFSDDPVAMAAKWVDGGCRRLHLVDLNGAFEGQPVNGDVVTAIARRYPNLPIQIGGGIRSLETIEHYVKAGVSYVIIGTKAVKEPEFVAEACRAFPGKVIVGLDAKDGFVATDGWAEVSSVQVIDLAKRFEADGVSAIVYTDIAKDGMMQGCNIPFTAALAAATRIPVIASGGIHNLGDIQALLNAKAPGIIGAITGRAIYEGTLDVAEAQALCDREQR</sequence>
<keyword id="KW-0028">Amino-acid biosynthesis</keyword>
<keyword id="KW-0963">Cytoplasm</keyword>
<keyword id="KW-0368">Histidine biosynthesis</keyword>
<keyword id="KW-0413">Isomerase</keyword>
<name>HIS4_PSE14</name>
<organism>
    <name type="scientific">Pseudomonas savastanoi pv. phaseolicola (strain 1448A / Race 6)</name>
    <name type="common">Pseudomonas syringae pv. phaseolicola (strain 1448A / Race 6)</name>
    <dbReference type="NCBI Taxonomy" id="264730"/>
    <lineage>
        <taxon>Bacteria</taxon>
        <taxon>Pseudomonadati</taxon>
        <taxon>Pseudomonadota</taxon>
        <taxon>Gammaproteobacteria</taxon>
        <taxon>Pseudomonadales</taxon>
        <taxon>Pseudomonadaceae</taxon>
        <taxon>Pseudomonas</taxon>
    </lineage>
</organism>